<gene>
    <name evidence="1" type="primary">mnmA</name>
    <name type="synonym">trmU</name>
    <name type="ordered locus">Sputw3181_1776</name>
</gene>
<comment type="function">
    <text evidence="1">Catalyzes the 2-thiolation of uridine at the wobble position (U34) of tRNA, leading to the formation of s(2)U34.</text>
</comment>
<comment type="catalytic activity">
    <reaction evidence="1">
        <text>S-sulfanyl-L-cysteinyl-[protein] + uridine(34) in tRNA + AH2 + ATP = 2-thiouridine(34) in tRNA + L-cysteinyl-[protein] + A + AMP + diphosphate + H(+)</text>
        <dbReference type="Rhea" id="RHEA:47032"/>
        <dbReference type="Rhea" id="RHEA-COMP:10131"/>
        <dbReference type="Rhea" id="RHEA-COMP:11726"/>
        <dbReference type="Rhea" id="RHEA-COMP:11727"/>
        <dbReference type="Rhea" id="RHEA-COMP:11728"/>
        <dbReference type="ChEBI" id="CHEBI:13193"/>
        <dbReference type="ChEBI" id="CHEBI:15378"/>
        <dbReference type="ChEBI" id="CHEBI:17499"/>
        <dbReference type="ChEBI" id="CHEBI:29950"/>
        <dbReference type="ChEBI" id="CHEBI:30616"/>
        <dbReference type="ChEBI" id="CHEBI:33019"/>
        <dbReference type="ChEBI" id="CHEBI:61963"/>
        <dbReference type="ChEBI" id="CHEBI:65315"/>
        <dbReference type="ChEBI" id="CHEBI:87170"/>
        <dbReference type="ChEBI" id="CHEBI:456215"/>
        <dbReference type="EC" id="2.8.1.13"/>
    </reaction>
</comment>
<comment type="subcellular location">
    <subcellularLocation>
        <location evidence="1">Cytoplasm</location>
    </subcellularLocation>
</comment>
<comment type="similarity">
    <text evidence="1">Belongs to the MnmA/TRMU family.</text>
</comment>
<sequence>MTSIEPTHTGKKVIVGMSGGVDSSVSAYLLMQQGYQVEGLFMKNWEEDDNNEYCAAAEDLKDAQAVCDKLGIKLHTVNFAAEYWDNVFEYFLAEYKAGRTPNPDIMCNKEIKFKAFLEFADEILDADYIAMGHYVRRRDNSDGSTQMLRGVDGNKDQSYFLYTLSHEQVARSLFPVGELEKHQVREIAKEMGLITHDKKDSTGICFIGERKFTEFLGTYLPAQPGNIETPEGEVIGTHQGLMYHTLGQRKGLGIGGMKNSNDDPWYVVDKDLERNVLIVGQGGHHPRLMSNGMTVNQLHWVDRTGPVDGCHITVKTRYRQQDVPCTLTYTDEHTLRVVFDEPVAAVTPGQSVVFYDGEVCLGGGIIDQLIRG</sequence>
<organism>
    <name type="scientific">Shewanella sp. (strain W3-18-1)</name>
    <dbReference type="NCBI Taxonomy" id="351745"/>
    <lineage>
        <taxon>Bacteria</taxon>
        <taxon>Pseudomonadati</taxon>
        <taxon>Pseudomonadota</taxon>
        <taxon>Gammaproteobacteria</taxon>
        <taxon>Alteromonadales</taxon>
        <taxon>Shewanellaceae</taxon>
        <taxon>Shewanella</taxon>
    </lineage>
</organism>
<feature type="chain" id="PRO_1000009576" description="tRNA-specific 2-thiouridylase MnmA">
    <location>
        <begin position="1"/>
        <end position="372"/>
    </location>
</feature>
<feature type="region of interest" description="Interaction with target base in tRNA" evidence="1">
    <location>
        <begin position="102"/>
        <end position="104"/>
    </location>
</feature>
<feature type="region of interest" description="Interaction with tRNA" evidence="1">
    <location>
        <begin position="155"/>
        <end position="157"/>
    </location>
</feature>
<feature type="region of interest" description="Interaction with tRNA" evidence="1">
    <location>
        <begin position="317"/>
        <end position="318"/>
    </location>
</feature>
<feature type="active site" description="Nucleophile" evidence="1">
    <location>
        <position position="107"/>
    </location>
</feature>
<feature type="active site" description="Cysteine persulfide intermediate" evidence="1">
    <location>
        <position position="205"/>
    </location>
</feature>
<feature type="binding site" evidence="1">
    <location>
        <begin position="16"/>
        <end position="23"/>
    </location>
    <ligand>
        <name>ATP</name>
        <dbReference type="ChEBI" id="CHEBI:30616"/>
    </ligand>
</feature>
<feature type="binding site" evidence="1">
    <location>
        <position position="42"/>
    </location>
    <ligand>
        <name>ATP</name>
        <dbReference type="ChEBI" id="CHEBI:30616"/>
    </ligand>
</feature>
<feature type="binding site" evidence="1">
    <location>
        <position position="132"/>
    </location>
    <ligand>
        <name>ATP</name>
        <dbReference type="ChEBI" id="CHEBI:30616"/>
    </ligand>
</feature>
<feature type="site" description="Interaction with tRNA" evidence="1">
    <location>
        <position position="133"/>
    </location>
</feature>
<feature type="site" description="Interaction with tRNA" evidence="1">
    <location>
        <position position="350"/>
    </location>
</feature>
<feature type="disulfide bond" description="Alternate" evidence="1">
    <location>
        <begin position="107"/>
        <end position="205"/>
    </location>
</feature>
<accession>A1RIW8</accession>
<evidence type="ECO:0000255" key="1">
    <source>
        <dbReference type="HAMAP-Rule" id="MF_00144"/>
    </source>
</evidence>
<dbReference type="EC" id="2.8.1.13" evidence="1"/>
<dbReference type="EMBL" id="CP000503">
    <property type="protein sequence ID" value="ABM24613.1"/>
    <property type="molecule type" value="Genomic_DNA"/>
</dbReference>
<dbReference type="RefSeq" id="WP_011789110.1">
    <property type="nucleotide sequence ID" value="NC_008750.1"/>
</dbReference>
<dbReference type="SMR" id="A1RIW8"/>
<dbReference type="KEGG" id="shw:Sputw3181_1776"/>
<dbReference type="HOGENOM" id="CLU_035188_1_0_6"/>
<dbReference type="Proteomes" id="UP000002597">
    <property type="component" value="Chromosome"/>
</dbReference>
<dbReference type="GO" id="GO:0005737">
    <property type="term" value="C:cytoplasm"/>
    <property type="evidence" value="ECO:0007669"/>
    <property type="project" value="UniProtKB-SubCell"/>
</dbReference>
<dbReference type="GO" id="GO:0005524">
    <property type="term" value="F:ATP binding"/>
    <property type="evidence" value="ECO:0007669"/>
    <property type="project" value="UniProtKB-KW"/>
</dbReference>
<dbReference type="GO" id="GO:0000049">
    <property type="term" value="F:tRNA binding"/>
    <property type="evidence" value="ECO:0007669"/>
    <property type="project" value="UniProtKB-KW"/>
</dbReference>
<dbReference type="GO" id="GO:0103016">
    <property type="term" value="F:tRNA-uridine 2-sulfurtransferase activity"/>
    <property type="evidence" value="ECO:0007669"/>
    <property type="project" value="UniProtKB-EC"/>
</dbReference>
<dbReference type="GO" id="GO:0002143">
    <property type="term" value="P:tRNA wobble position uridine thiolation"/>
    <property type="evidence" value="ECO:0007669"/>
    <property type="project" value="TreeGrafter"/>
</dbReference>
<dbReference type="CDD" id="cd01998">
    <property type="entry name" value="MnmA_TRMU-like"/>
    <property type="match status" value="1"/>
</dbReference>
<dbReference type="FunFam" id="2.30.30.280:FF:000001">
    <property type="entry name" value="tRNA-specific 2-thiouridylase MnmA"/>
    <property type="match status" value="1"/>
</dbReference>
<dbReference type="FunFam" id="2.40.30.10:FF:000023">
    <property type="entry name" value="tRNA-specific 2-thiouridylase MnmA"/>
    <property type="match status" value="1"/>
</dbReference>
<dbReference type="FunFam" id="3.40.50.620:FF:000004">
    <property type="entry name" value="tRNA-specific 2-thiouridylase MnmA"/>
    <property type="match status" value="1"/>
</dbReference>
<dbReference type="Gene3D" id="2.30.30.280">
    <property type="entry name" value="Adenine nucleotide alpha hydrolases-like domains"/>
    <property type="match status" value="1"/>
</dbReference>
<dbReference type="Gene3D" id="3.40.50.620">
    <property type="entry name" value="HUPs"/>
    <property type="match status" value="1"/>
</dbReference>
<dbReference type="Gene3D" id="2.40.30.10">
    <property type="entry name" value="Translation factors"/>
    <property type="match status" value="1"/>
</dbReference>
<dbReference type="HAMAP" id="MF_00144">
    <property type="entry name" value="tRNA_thiouridyl_MnmA"/>
    <property type="match status" value="1"/>
</dbReference>
<dbReference type="InterPro" id="IPR004506">
    <property type="entry name" value="MnmA-like"/>
</dbReference>
<dbReference type="InterPro" id="IPR046885">
    <property type="entry name" value="MnmA-like_C"/>
</dbReference>
<dbReference type="InterPro" id="IPR046884">
    <property type="entry name" value="MnmA-like_central"/>
</dbReference>
<dbReference type="InterPro" id="IPR023382">
    <property type="entry name" value="MnmA-like_central_sf"/>
</dbReference>
<dbReference type="InterPro" id="IPR014729">
    <property type="entry name" value="Rossmann-like_a/b/a_fold"/>
</dbReference>
<dbReference type="NCBIfam" id="NF001138">
    <property type="entry name" value="PRK00143.1"/>
    <property type="match status" value="1"/>
</dbReference>
<dbReference type="NCBIfam" id="TIGR00420">
    <property type="entry name" value="trmU"/>
    <property type="match status" value="1"/>
</dbReference>
<dbReference type="PANTHER" id="PTHR11933:SF5">
    <property type="entry name" value="MITOCHONDRIAL TRNA-SPECIFIC 2-THIOURIDYLASE 1"/>
    <property type="match status" value="1"/>
</dbReference>
<dbReference type="PANTHER" id="PTHR11933">
    <property type="entry name" value="TRNA 5-METHYLAMINOMETHYL-2-THIOURIDYLATE -METHYLTRANSFERASE"/>
    <property type="match status" value="1"/>
</dbReference>
<dbReference type="Pfam" id="PF03054">
    <property type="entry name" value="tRNA_Me_trans"/>
    <property type="match status" value="1"/>
</dbReference>
<dbReference type="Pfam" id="PF20258">
    <property type="entry name" value="tRNA_Me_trans_C"/>
    <property type="match status" value="1"/>
</dbReference>
<dbReference type="Pfam" id="PF20259">
    <property type="entry name" value="tRNA_Me_trans_M"/>
    <property type="match status" value="1"/>
</dbReference>
<dbReference type="SUPFAM" id="SSF52402">
    <property type="entry name" value="Adenine nucleotide alpha hydrolases-like"/>
    <property type="match status" value="1"/>
</dbReference>
<proteinExistence type="inferred from homology"/>
<protein>
    <recommendedName>
        <fullName evidence="1">tRNA-specific 2-thiouridylase MnmA</fullName>
        <ecNumber evidence="1">2.8.1.13</ecNumber>
    </recommendedName>
</protein>
<name>MNMA_SHESW</name>
<keyword id="KW-0067">ATP-binding</keyword>
<keyword id="KW-0963">Cytoplasm</keyword>
<keyword id="KW-1015">Disulfide bond</keyword>
<keyword id="KW-0547">Nucleotide-binding</keyword>
<keyword id="KW-0694">RNA-binding</keyword>
<keyword id="KW-0808">Transferase</keyword>
<keyword id="KW-0819">tRNA processing</keyword>
<keyword id="KW-0820">tRNA-binding</keyword>
<reference key="1">
    <citation type="submission" date="2006-12" db="EMBL/GenBank/DDBJ databases">
        <title>Complete sequence of Shewanella sp. W3-18-1.</title>
        <authorList>
            <consortium name="US DOE Joint Genome Institute"/>
            <person name="Copeland A."/>
            <person name="Lucas S."/>
            <person name="Lapidus A."/>
            <person name="Barry K."/>
            <person name="Detter J.C."/>
            <person name="Glavina del Rio T."/>
            <person name="Hammon N."/>
            <person name="Israni S."/>
            <person name="Dalin E."/>
            <person name="Tice H."/>
            <person name="Pitluck S."/>
            <person name="Chain P."/>
            <person name="Malfatti S."/>
            <person name="Shin M."/>
            <person name="Vergez L."/>
            <person name="Schmutz J."/>
            <person name="Larimer F."/>
            <person name="Land M."/>
            <person name="Hauser L."/>
            <person name="Kyrpides N."/>
            <person name="Lykidis A."/>
            <person name="Tiedje J."/>
            <person name="Richardson P."/>
        </authorList>
    </citation>
    <scope>NUCLEOTIDE SEQUENCE [LARGE SCALE GENOMIC DNA]</scope>
    <source>
        <strain>W3-18-1</strain>
    </source>
</reference>